<feature type="chain" id="PRO_1000144791" description="Hydroxyacylglutathione hydrolase">
    <location>
        <begin position="1"/>
        <end position="256"/>
    </location>
</feature>
<feature type="binding site" evidence="1">
    <location>
        <position position="55"/>
    </location>
    <ligand>
        <name>Zn(2+)</name>
        <dbReference type="ChEBI" id="CHEBI:29105"/>
        <label>1</label>
    </ligand>
</feature>
<feature type="binding site" evidence="1">
    <location>
        <position position="57"/>
    </location>
    <ligand>
        <name>Zn(2+)</name>
        <dbReference type="ChEBI" id="CHEBI:29105"/>
        <label>1</label>
    </ligand>
</feature>
<feature type="binding site" evidence="1">
    <location>
        <position position="59"/>
    </location>
    <ligand>
        <name>Zn(2+)</name>
        <dbReference type="ChEBI" id="CHEBI:29105"/>
        <label>2</label>
    </ligand>
</feature>
<feature type="binding site" evidence="1">
    <location>
        <position position="60"/>
    </location>
    <ligand>
        <name>Zn(2+)</name>
        <dbReference type="ChEBI" id="CHEBI:29105"/>
        <label>2</label>
    </ligand>
</feature>
<feature type="binding site" evidence="1">
    <location>
        <position position="113"/>
    </location>
    <ligand>
        <name>Zn(2+)</name>
        <dbReference type="ChEBI" id="CHEBI:29105"/>
        <label>1</label>
    </ligand>
</feature>
<feature type="binding site" evidence="1">
    <location>
        <position position="130"/>
    </location>
    <ligand>
        <name>Zn(2+)</name>
        <dbReference type="ChEBI" id="CHEBI:29105"/>
        <label>1</label>
    </ligand>
</feature>
<feature type="binding site" evidence="1">
    <location>
        <position position="130"/>
    </location>
    <ligand>
        <name>Zn(2+)</name>
        <dbReference type="ChEBI" id="CHEBI:29105"/>
        <label>2</label>
    </ligand>
</feature>
<feature type="binding site" evidence="1">
    <location>
        <position position="168"/>
    </location>
    <ligand>
        <name>Zn(2+)</name>
        <dbReference type="ChEBI" id="CHEBI:29105"/>
        <label>2</label>
    </ligand>
</feature>
<comment type="function">
    <text evidence="1">Thiolesterase that catalyzes the hydrolysis of S-D-lactoyl-glutathione to form glutathione and D-lactic acid.</text>
</comment>
<comment type="catalytic activity">
    <reaction evidence="1">
        <text>an S-(2-hydroxyacyl)glutathione + H2O = a 2-hydroxy carboxylate + glutathione + H(+)</text>
        <dbReference type="Rhea" id="RHEA:21864"/>
        <dbReference type="ChEBI" id="CHEBI:15377"/>
        <dbReference type="ChEBI" id="CHEBI:15378"/>
        <dbReference type="ChEBI" id="CHEBI:57925"/>
        <dbReference type="ChEBI" id="CHEBI:58896"/>
        <dbReference type="ChEBI" id="CHEBI:71261"/>
        <dbReference type="EC" id="3.1.2.6"/>
    </reaction>
</comment>
<comment type="cofactor">
    <cofactor evidence="1">
        <name>Zn(2+)</name>
        <dbReference type="ChEBI" id="CHEBI:29105"/>
    </cofactor>
    <text evidence="1">Binds 2 Zn(2+) ions per subunit.</text>
</comment>
<comment type="pathway">
    <text evidence="1">Secondary metabolite metabolism; methylglyoxal degradation; (R)-lactate from methylglyoxal: step 2/2.</text>
</comment>
<comment type="subunit">
    <text evidence="1">Monomer.</text>
</comment>
<comment type="similarity">
    <text evidence="1">Belongs to the metallo-beta-lactamase superfamily. Glyoxalase II family.</text>
</comment>
<evidence type="ECO:0000255" key="1">
    <source>
        <dbReference type="HAMAP-Rule" id="MF_01374"/>
    </source>
</evidence>
<dbReference type="EC" id="3.1.2.6" evidence="1"/>
<dbReference type="EMBL" id="CP000510">
    <property type="protein sequence ID" value="ABM02353.1"/>
    <property type="molecule type" value="Genomic_DNA"/>
</dbReference>
<dbReference type="RefSeq" id="WP_011768912.1">
    <property type="nucleotide sequence ID" value="NC_008709.1"/>
</dbReference>
<dbReference type="SMR" id="A1SS88"/>
<dbReference type="STRING" id="357804.Ping_0498"/>
<dbReference type="KEGG" id="pin:Ping_0498"/>
<dbReference type="eggNOG" id="COG0491">
    <property type="taxonomic scope" value="Bacteria"/>
</dbReference>
<dbReference type="HOGENOM" id="CLU_030571_4_1_6"/>
<dbReference type="OrthoDB" id="9802248at2"/>
<dbReference type="UniPathway" id="UPA00619">
    <property type="reaction ID" value="UER00676"/>
</dbReference>
<dbReference type="Proteomes" id="UP000000639">
    <property type="component" value="Chromosome"/>
</dbReference>
<dbReference type="GO" id="GO:0004416">
    <property type="term" value="F:hydroxyacylglutathione hydrolase activity"/>
    <property type="evidence" value="ECO:0007669"/>
    <property type="project" value="UniProtKB-UniRule"/>
</dbReference>
<dbReference type="GO" id="GO:0046872">
    <property type="term" value="F:metal ion binding"/>
    <property type="evidence" value="ECO:0007669"/>
    <property type="project" value="UniProtKB-KW"/>
</dbReference>
<dbReference type="GO" id="GO:0019243">
    <property type="term" value="P:methylglyoxal catabolic process to D-lactate via S-lactoyl-glutathione"/>
    <property type="evidence" value="ECO:0007669"/>
    <property type="project" value="InterPro"/>
</dbReference>
<dbReference type="CDD" id="cd07723">
    <property type="entry name" value="hydroxyacylglutathione_hydrolase_MBL-fold"/>
    <property type="match status" value="1"/>
</dbReference>
<dbReference type="Gene3D" id="3.60.15.10">
    <property type="entry name" value="Ribonuclease Z/Hydroxyacylglutathione hydrolase-like"/>
    <property type="match status" value="1"/>
</dbReference>
<dbReference type="HAMAP" id="MF_01374">
    <property type="entry name" value="Glyoxalase_2"/>
    <property type="match status" value="1"/>
</dbReference>
<dbReference type="InterPro" id="IPR035680">
    <property type="entry name" value="Clx_II_MBL"/>
</dbReference>
<dbReference type="InterPro" id="IPR050110">
    <property type="entry name" value="Glyoxalase_II_hydrolase"/>
</dbReference>
<dbReference type="InterPro" id="IPR032282">
    <property type="entry name" value="HAGH_C"/>
</dbReference>
<dbReference type="InterPro" id="IPR017782">
    <property type="entry name" value="Hydroxyacylglutathione_Hdrlase"/>
</dbReference>
<dbReference type="InterPro" id="IPR001279">
    <property type="entry name" value="Metallo-B-lactamas"/>
</dbReference>
<dbReference type="InterPro" id="IPR036866">
    <property type="entry name" value="RibonucZ/Hydroxyglut_hydro"/>
</dbReference>
<dbReference type="NCBIfam" id="TIGR03413">
    <property type="entry name" value="GSH_gloB"/>
    <property type="match status" value="1"/>
</dbReference>
<dbReference type="PANTHER" id="PTHR43705">
    <property type="entry name" value="HYDROXYACYLGLUTATHIONE HYDROLASE"/>
    <property type="match status" value="1"/>
</dbReference>
<dbReference type="PANTHER" id="PTHR43705:SF1">
    <property type="entry name" value="HYDROXYACYLGLUTATHIONE HYDROLASE GLOB"/>
    <property type="match status" value="1"/>
</dbReference>
<dbReference type="Pfam" id="PF16123">
    <property type="entry name" value="HAGH_C"/>
    <property type="match status" value="1"/>
</dbReference>
<dbReference type="Pfam" id="PF00753">
    <property type="entry name" value="Lactamase_B"/>
    <property type="match status" value="1"/>
</dbReference>
<dbReference type="PIRSF" id="PIRSF005457">
    <property type="entry name" value="Glx"/>
    <property type="match status" value="1"/>
</dbReference>
<dbReference type="SMART" id="SM00849">
    <property type="entry name" value="Lactamase_B"/>
    <property type="match status" value="1"/>
</dbReference>
<dbReference type="SUPFAM" id="SSF56281">
    <property type="entry name" value="Metallo-hydrolase/oxidoreductase"/>
    <property type="match status" value="1"/>
</dbReference>
<name>GLO2_PSYIN</name>
<proteinExistence type="inferred from homology"/>
<organism>
    <name type="scientific">Psychromonas ingrahamii (strain DSM 17664 / CCUG 51855 / 37)</name>
    <dbReference type="NCBI Taxonomy" id="357804"/>
    <lineage>
        <taxon>Bacteria</taxon>
        <taxon>Pseudomonadati</taxon>
        <taxon>Pseudomonadota</taxon>
        <taxon>Gammaproteobacteria</taxon>
        <taxon>Alteromonadales</taxon>
        <taxon>Psychromonadaceae</taxon>
        <taxon>Psychromonas</taxon>
    </lineage>
</organism>
<sequence length="256" mass="29146">MENVITIKAFEDNYIWLIKDSQSQHCIIVDPGDAAPVLTILEDQKLIVDAILLTHHHYDHIGGVDALLSARDEKISIYSKKKLFDRCRLVNESDTLSFFDGKLSLQVMEVPGHTLDHVAFYNDELLFCGDTLFSGGCGRVFEGSFEQMFKAVSRLALLPENTKVYCAHEYTQNNLIFAHQIEPKNKALLNYIQQVSKKRQQGQPTIPSTIGLEKEINPFLRCQQQTVINKLQSHLGKELNDPLSCFSALRQYKDNF</sequence>
<accession>A1SS88</accession>
<gene>
    <name evidence="1" type="primary">gloB</name>
    <name type="ordered locus">Ping_0498</name>
</gene>
<reference key="1">
    <citation type="journal article" date="2008" name="BMC Genomics">
        <title>Genomics of an extreme psychrophile, Psychromonas ingrahamii.</title>
        <authorList>
            <person name="Riley M."/>
            <person name="Staley J.T."/>
            <person name="Danchin A."/>
            <person name="Wang T.Z."/>
            <person name="Brettin T.S."/>
            <person name="Hauser L.J."/>
            <person name="Land M.L."/>
            <person name="Thompson L.S."/>
        </authorList>
    </citation>
    <scope>NUCLEOTIDE SEQUENCE [LARGE SCALE GENOMIC DNA]</scope>
    <source>
        <strain>DSM 17664 / CCUG 51855 / 37</strain>
    </source>
</reference>
<keyword id="KW-0378">Hydrolase</keyword>
<keyword id="KW-0479">Metal-binding</keyword>
<keyword id="KW-1185">Reference proteome</keyword>
<keyword id="KW-0862">Zinc</keyword>
<protein>
    <recommendedName>
        <fullName evidence="1">Hydroxyacylglutathione hydrolase</fullName>
        <ecNumber evidence="1">3.1.2.6</ecNumber>
    </recommendedName>
    <alternativeName>
        <fullName evidence="1">Glyoxalase II</fullName>
        <shortName evidence="1">Glx II</shortName>
    </alternativeName>
</protein>